<comment type="catalytic activity">
    <reaction evidence="1">
        <text>tRNA(His) + L-histidine + ATP = L-histidyl-tRNA(His) + AMP + diphosphate + H(+)</text>
        <dbReference type="Rhea" id="RHEA:17313"/>
        <dbReference type="Rhea" id="RHEA-COMP:9665"/>
        <dbReference type="Rhea" id="RHEA-COMP:9689"/>
        <dbReference type="ChEBI" id="CHEBI:15378"/>
        <dbReference type="ChEBI" id="CHEBI:30616"/>
        <dbReference type="ChEBI" id="CHEBI:33019"/>
        <dbReference type="ChEBI" id="CHEBI:57595"/>
        <dbReference type="ChEBI" id="CHEBI:78442"/>
        <dbReference type="ChEBI" id="CHEBI:78527"/>
        <dbReference type="ChEBI" id="CHEBI:456215"/>
        <dbReference type="EC" id="6.1.1.21"/>
    </reaction>
</comment>
<comment type="subunit">
    <text evidence="1">Homodimer.</text>
</comment>
<comment type="subcellular location">
    <subcellularLocation>
        <location evidence="1">Cytoplasm</location>
    </subcellularLocation>
</comment>
<comment type="similarity">
    <text evidence="1">Belongs to the class-II aminoacyl-tRNA synthetase family.</text>
</comment>
<evidence type="ECO:0000255" key="1">
    <source>
        <dbReference type="HAMAP-Rule" id="MF_00127"/>
    </source>
</evidence>
<protein>
    <recommendedName>
        <fullName evidence="1">Histidine--tRNA ligase</fullName>
        <ecNumber evidence="1">6.1.1.21</ecNumber>
    </recommendedName>
    <alternativeName>
        <fullName evidence="1">Histidyl-tRNA synthetase</fullName>
        <shortName evidence="1">HisRS</shortName>
    </alternativeName>
</protein>
<proteinExistence type="inferred from homology"/>
<feature type="chain" id="PRO_1000016479" description="Histidine--tRNA ligase">
    <location>
        <begin position="1"/>
        <end position="426"/>
    </location>
</feature>
<reference key="1">
    <citation type="journal article" date="2006" name="PLoS Biol.">
        <title>The genome of deep-sea vent chemolithoautotroph Thiomicrospira crunogena XCL-2.</title>
        <authorList>
            <person name="Scott K.M."/>
            <person name="Sievert S.M."/>
            <person name="Abril F.N."/>
            <person name="Ball L.A."/>
            <person name="Barrett C.J."/>
            <person name="Blake R.A."/>
            <person name="Boller A.J."/>
            <person name="Chain P.S.G."/>
            <person name="Clark J.A."/>
            <person name="Davis C.R."/>
            <person name="Detter C."/>
            <person name="Do K.F."/>
            <person name="Dobrinski K.P."/>
            <person name="Faza B.I."/>
            <person name="Fitzpatrick K.A."/>
            <person name="Freyermuth S.K."/>
            <person name="Harmer T.L."/>
            <person name="Hauser L.J."/>
            <person name="Huegler M."/>
            <person name="Kerfeld C.A."/>
            <person name="Klotz M.G."/>
            <person name="Kong W.W."/>
            <person name="Land M."/>
            <person name="Lapidus A."/>
            <person name="Larimer F.W."/>
            <person name="Longo D.L."/>
            <person name="Lucas S."/>
            <person name="Malfatti S.A."/>
            <person name="Massey S.E."/>
            <person name="Martin D.D."/>
            <person name="McCuddin Z."/>
            <person name="Meyer F."/>
            <person name="Moore J.L."/>
            <person name="Ocampo L.H. Jr."/>
            <person name="Paul J.H."/>
            <person name="Paulsen I.T."/>
            <person name="Reep D.K."/>
            <person name="Ren Q."/>
            <person name="Ross R.L."/>
            <person name="Sato P.Y."/>
            <person name="Thomas P."/>
            <person name="Tinkham L.E."/>
            <person name="Zeruth G.T."/>
        </authorList>
    </citation>
    <scope>NUCLEOTIDE SEQUENCE [LARGE SCALE GENOMIC DNA]</scope>
    <source>
        <strain>DSM 25203 / XCL-2</strain>
    </source>
</reference>
<sequence length="426" mass="48069">MSKQINAIRGMNDLYGDQSHAFDYLVQTAESVLKQYGFQSIRLPIVEKTELFARSIGEVTDIVEKEMYTFEDRNGDSLTLRPEGTAGCVRAVIQNGLAHNQIQKLYYTGPMFRHERPQKGRYRQFNQFGVEVFGIESVDIDAELIALSARLWERLGLQNLELQINSLGSQAARQAYRDILVAYFEEHKSQLDEDSLRRLSTNPLRILDTKNPDMKALVEAAPKLMDHLDEASKQHYEELKAHLDDLGVAYVENPNLVRGLDYYNRTVFEWVTTELGAQGTVCAGGRYDGLVEQIGGKPTPAVGFAMGIERLMALLMDNELVHEENGPDVYMVLAGDSTKRPGLVISEQIRENLPDIKVQMNCGGGSFKSQFKKADKSGARIALVLGEDEVNQKQIAVKYLREEREQEMVPWDQMVTLLKTALTESK</sequence>
<keyword id="KW-0030">Aminoacyl-tRNA synthetase</keyword>
<keyword id="KW-0067">ATP-binding</keyword>
<keyword id="KW-0963">Cytoplasm</keyword>
<keyword id="KW-0436">Ligase</keyword>
<keyword id="KW-0547">Nucleotide-binding</keyword>
<keyword id="KW-0648">Protein biosynthesis</keyword>
<organism>
    <name type="scientific">Hydrogenovibrio crunogenus (strain DSM 25203 / XCL-2)</name>
    <name type="common">Thiomicrospira crunogena</name>
    <dbReference type="NCBI Taxonomy" id="317025"/>
    <lineage>
        <taxon>Bacteria</taxon>
        <taxon>Pseudomonadati</taxon>
        <taxon>Pseudomonadota</taxon>
        <taxon>Gammaproteobacteria</taxon>
        <taxon>Thiotrichales</taxon>
        <taxon>Piscirickettsiaceae</taxon>
        <taxon>Hydrogenovibrio</taxon>
    </lineage>
</organism>
<gene>
    <name evidence="1" type="primary">hisS</name>
    <name type="ordered locus">Tcr_0622</name>
</gene>
<dbReference type="EC" id="6.1.1.21" evidence="1"/>
<dbReference type="EMBL" id="CP000109">
    <property type="protein sequence ID" value="ABB41218.1"/>
    <property type="molecule type" value="Genomic_DNA"/>
</dbReference>
<dbReference type="SMR" id="Q31I05"/>
<dbReference type="STRING" id="317025.Tcr_0622"/>
<dbReference type="KEGG" id="tcx:Tcr_0622"/>
<dbReference type="eggNOG" id="COG0124">
    <property type="taxonomic scope" value="Bacteria"/>
</dbReference>
<dbReference type="HOGENOM" id="CLU_025113_1_1_6"/>
<dbReference type="OrthoDB" id="9800814at2"/>
<dbReference type="GO" id="GO:0005737">
    <property type="term" value="C:cytoplasm"/>
    <property type="evidence" value="ECO:0007669"/>
    <property type="project" value="UniProtKB-SubCell"/>
</dbReference>
<dbReference type="GO" id="GO:0005524">
    <property type="term" value="F:ATP binding"/>
    <property type="evidence" value="ECO:0007669"/>
    <property type="project" value="UniProtKB-UniRule"/>
</dbReference>
<dbReference type="GO" id="GO:0004821">
    <property type="term" value="F:histidine-tRNA ligase activity"/>
    <property type="evidence" value="ECO:0007669"/>
    <property type="project" value="UniProtKB-UniRule"/>
</dbReference>
<dbReference type="GO" id="GO:0006427">
    <property type="term" value="P:histidyl-tRNA aminoacylation"/>
    <property type="evidence" value="ECO:0007669"/>
    <property type="project" value="UniProtKB-UniRule"/>
</dbReference>
<dbReference type="CDD" id="cd00773">
    <property type="entry name" value="HisRS-like_core"/>
    <property type="match status" value="1"/>
</dbReference>
<dbReference type="CDD" id="cd00859">
    <property type="entry name" value="HisRS_anticodon"/>
    <property type="match status" value="1"/>
</dbReference>
<dbReference type="FunFam" id="3.30.930.10:FF:000005">
    <property type="entry name" value="Histidine--tRNA ligase"/>
    <property type="match status" value="1"/>
</dbReference>
<dbReference type="Gene3D" id="3.40.50.800">
    <property type="entry name" value="Anticodon-binding domain"/>
    <property type="match status" value="1"/>
</dbReference>
<dbReference type="Gene3D" id="3.30.930.10">
    <property type="entry name" value="Bira Bifunctional Protein, Domain 2"/>
    <property type="match status" value="1"/>
</dbReference>
<dbReference type="HAMAP" id="MF_00127">
    <property type="entry name" value="His_tRNA_synth"/>
    <property type="match status" value="1"/>
</dbReference>
<dbReference type="InterPro" id="IPR006195">
    <property type="entry name" value="aa-tRNA-synth_II"/>
</dbReference>
<dbReference type="InterPro" id="IPR045864">
    <property type="entry name" value="aa-tRNA-synth_II/BPL/LPL"/>
</dbReference>
<dbReference type="InterPro" id="IPR004154">
    <property type="entry name" value="Anticodon-bd"/>
</dbReference>
<dbReference type="InterPro" id="IPR036621">
    <property type="entry name" value="Anticodon-bd_dom_sf"/>
</dbReference>
<dbReference type="InterPro" id="IPR015807">
    <property type="entry name" value="His-tRNA-ligase"/>
</dbReference>
<dbReference type="InterPro" id="IPR041715">
    <property type="entry name" value="HisRS-like_core"/>
</dbReference>
<dbReference type="InterPro" id="IPR004516">
    <property type="entry name" value="HisRS/HisZ"/>
</dbReference>
<dbReference type="InterPro" id="IPR033656">
    <property type="entry name" value="HisRS_anticodon"/>
</dbReference>
<dbReference type="NCBIfam" id="TIGR00442">
    <property type="entry name" value="hisS"/>
    <property type="match status" value="1"/>
</dbReference>
<dbReference type="PANTHER" id="PTHR43707:SF1">
    <property type="entry name" value="HISTIDINE--TRNA LIGASE, MITOCHONDRIAL-RELATED"/>
    <property type="match status" value="1"/>
</dbReference>
<dbReference type="PANTHER" id="PTHR43707">
    <property type="entry name" value="HISTIDYL-TRNA SYNTHETASE"/>
    <property type="match status" value="1"/>
</dbReference>
<dbReference type="Pfam" id="PF03129">
    <property type="entry name" value="HGTP_anticodon"/>
    <property type="match status" value="1"/>
</dbReference>
<dbReference type="Pfam" id="PF13393">
    <property type="entry name" value="tRNA-synt_His"/>
    <property type="match status" value="1"/>
</dbReference>
<dbReference type="PIRSF" id="PIRSF001549">
    <property type="entry name" value="His-tRNA_synth"/>
    <property type="match status" value="1"/>
</dbReference>
<dbReference type="SUPFAM" id="SSF52954">
    <property type="entry name" value="Class II aaRS ABD-related"/>
    <property type="match status" value="1"/>
</dbReference>
<dbReference type="SUPFAM" id="SSF55681">
    <property type="entry name" value="Class II aaRS and biotin synthetases"/>
    <property type="match status" value="1"/>
</dbReference>
<dbReference type="PROSITE" id="PS50862">
    <property type="entry name" value="AA_TRNA_LIGASE_II"/>
    <property type="match status" value="1"/>
</dbReference>
<accession>Q31I05</accession>
<name>SYH_HYDCU</name>